<proteinExistence type="inferred from homology"/>
<accession>O46313</accession>
<reference key="1">
    <citation type="submission" date="1998-01" db="EMBL/GenBank/DDBJ databases">
        <authorList>
            <person name="de Los Santos M."/>
            <person name="Carrillo C."/>
            <person name="Panebra A."/>
            <person name="Montoya Y."/>
        </authorList>
    </citation>
    <scope>NUCLEOTIDE SEQUENCE [MRNA]</scope>
    <source>
        <strain>MHOM/PE/84/LC26</strain>
    </source>
</reference>
<keyword id="KW-0687">Ribonucleoprotein</keyword>
<keyword id="KW-0689">Ribosomal protein</keyword>
<organism>
    <name type="scientific">Leishmania peruviana</name>
    <dbReference type="NCBI Taxonomy" id="5681"/>
    <lineage>
        <taxon>Eukaryota</taxon>
        <taxon>Discoba</taxon>
        <taxon>Euglenozoa</taxon>
        <taxon>Kinetoplastea</taxon>
        <taxon>Metakinetoplastina</taxon>
        <taxon>Trypanosomatida</taxon>
        <taxon>Trypanosomatidae</taxon>
        <taxon>Leishmaniinae</taxon>
        <taxon>Leishmania</taxon>
        <taxon>Leishmania braziliensis species complex</taxon>
    </lineage>
</organism>
<evidence type="ECO:0000256" key="1">
    <source>
        <dbReference type="SAM" id="MobiDB-lite"/>
    </source>
</evidence>
<evidence type="ECO:0000305" key="2"/>
<name>RLA1_LEIPE</name>
<dbReference type="EMBL" id="AF045249">
    <property type="protein sequence ID" value="AAC02701.1"/>
    <property type="molecule type" value="mRNA"/>
</dbReference>
<dbReference type="SMR" id="O46313"/>
<dbReference type="GO" id="GO:0022625">
    <property type="term" value="C:cytosolic large ribosomal subunit"/>
    <property type="evidence" value="ECO:0007669"/>
    <property type="project" value="TreeGrafter"/>
</dbReference>
<dbReference type="GO" id="GO:0030295">
    <property type="term" value="F:protein kinase activator activity"/>
    <property type="evidence" value="ECO:0007669"/>
    <property type="project" value="TreeGrafter"/>
</dbReference>
<dbReference type="GO" id="GO:0043021">
    <property type="term" value="F:ribonucleoprotein complex binding"/>
    <property type="evidence" value="ECO:0007669"/>
    <property type="project" value="TreeGrafter"/>
</dbReference>
<dbReference type="GO" id="GO:0003735">
    <property type="term" value="F:structural constituent of ribosome"/>
    <property type="evidence" value="ECO:0007669"/>
    <property type="project" value="InterPro"/>
</dbReference>
<dbReference type="GO" id="GO:0002181">
    <property type="term" value="P:cytoplasmic translation"/>
    <property type="evidence" value="ECO:0007669"/>
    <property type="project" value="TreeGrafter"/>
</dbReference>
<dbReference type="GO" id="GO:0006414">
    <property type="term" value="P:translational elongation"/>
    <property type="evidence" value="ECO:0007669"/>
    <property type="project" value="InterPro"/>
</dbReference>
<dbReference type="CDD" id="cd05831">
    <property type="entry name" value="Ribosomal_P1"/>
    <property type="match status" value="1"/>
</dbReference>
<dbReference type="FunFam" id="1.10.10.1410:FF:000002">
    <property type="entry name" value="60S acidic ribosomal protein P2"/>
    <property type="match status" value="1"/>
</dbReference>
<dbReference type="Gene3D" id="1.10.10.1410">
    <property type="match status" value="1"/>
</dbReference>
<dbReference type="HAMAP" id="MF_01478">
    <property type="entry name" value="Ribosomal_L12_arch"/>
    <property type="match status" value="1"/>
</dbReference>
<dbReference type="InterPro" id="IPR038716">
    <property type="entry name" value="P1/P2_N_sf"/>
</dbReference>
<dbReference type="InterPro" id="IPR027534">
    <property type="entry name" value="Ribosomal_P1/P2"/>
</dbReference>
<dbReference type="PANTHER" id="PTHR45696">
    <property type="entry name" value="60S ACIDIC RIBOSOMAL PROTEIN P1"/>
    <property type="match status" value="1"/>
</dbReference>
<dbReference type="PANTHER" id="PTHR45696:SF6">
    <property type="entry name" value="ACIDIC RIBOSOMAL PROTEIN P2, PUTATIVE-RELATED"/>
    <property type="match status" value="1"/>
</dbReference>
<dbReference type="Pfam" id="PF00428">
    <property type="entry name" value="Ribosomal_60s"/>
    <property type="match status" value="1"/>
</dbReference>
<sequence length="107" mass="10896">MTTETLACTYAALMLSDAGLPTSAENIAAAVKAAGVSVRPTMPIIFARFLEKKSVEALMAAAATQAPTATSAAAAPAAGEASGKAEEKKKEEPEEEGDDDMGFGLFD</sequence>
<protein>
    <recommendedName>
        <fullName evidence="2">Large ribosomal subunit protein P1</fullName>
    </recommendedName>
    <alternativeName>
        <fullName>60S acidic ribosomal protein P1</fullName>
    </alternativeName>
</protein>
<feature type="chain" id="PRO_0000157693" description="Large ribosomal subunit protein P1">
    <location>
        <begin position="1"/>
        <end position="107"/>
    </location>
</feature>
<feature type="region of interest" description="Disordered" evidence="1">
    <location>
        <begin position="67"/>
        <end position="107"/>
    </location>
</feature>
<feature type="compositionally biased region" description="Low complexity" evidence="1">
    <location>
        <begin position="67"/>
        <end position="82"/>
    </location>
</feature>
<feature type="compositionally biased region" description="Basic and acidic residues" evidence="1">
    <location>
        <begin position="83"/>
        <end position="92"/>
    </location>
</feature>
<comment type="function">
    <text>Plays an important role in the elongation step of protein synthesis.</text>
</comment>
<comment type="subunit">
    <text>P1 and P2 exist as dimers at the large ribosomal subunit.</text>
</comment>
<comment type="similarity">
    <text evidence="2">Belongs to the eukaryotic ribosomal protein P1/P2 family.</text>
</comment>